<gene>
    <name type="primary">slc52a3b</name>
    <name type="synonym">rft2b</name>
    <name type="ORF">zgc:91890</name>
</gene>
<sequence>MSLFTHVLACLFGIGSWVAINGMWVELPLIVTAIPEGWLLPSYLTIIIQMANIGPLFITLMHRFRPGVLDERPVIYTIVAVGVVATFLLAFLWKHTLTFGDGEHSAALLSLSFLLSVVDCTSSVTFLPFMMRLQPQYLTTYFIGEGLSGLVPALVALVQGVGVVHCKNASANANFSLGNISQSLLETHYQPANFSTQGFFLFLSAMMMVCLGAFLLLNLHPAVAREHKSMKGYIDDSRRVEKIDLSQSPNDETPEQRPMLDFPEGSAIKQRSSFGKGTYSRTELVFIFVVLAWVNALTNAVLPSVQSYSCLPYGNQAYHLAATLSSVANPVACFIAMFVPIRSLVLMGVLTVTGTGFGAYIMAMAALSPCPLLINDDLGAALIVITWVIFVLSLSYVKVIIGVILRDEGHSALVWCGAVVQLGSMLGALSMFPLISVYRLFQSGDPCNTKCP</sequence>
<feature type="chain" id="PRO_0000399794" description="Solute carrier family 52, riboflavin transporter, member 3-B">
    <location>
        <begin position="1"/>
        <end position="452"/>
    </location>
</feature>
<feature type="transmembrane region" description="Helical" evidence="3">
    <location>
        <begin position="11"/>
        <end position="31"/>
    </location>
</feature>
<feature type="transmembrane region" description="Helical" evidence="3">
    <location>
        <begin position="38"/>
        <end position="58"/>
    </location>
</feature>
<feature type="transmembrane region" description="Helical" evidence="3">
    <location>
        <begin position="73"/>
        <end position="93"/>
    </location>
</feature>
<feature type="transmembrane region" description="Helical" evidence="3">
    <location>
        <begin position="111"/>
        <end position="131"/>
    </location>
</feature>
<feature type="transmembrane region" description="Helical" evidence="3">
    <location>
        <begin position="138"/>
        <end position="158"/>
    </location>
</feature>
<feature type="transmembrane region" description="Helical" evidence="3">
    <location>
        <begin position="199"/>
        <end position="219"/>
    </location>
</feature>
<feature type="transmembrane region" description="Helical" evidence="3">
    <location>
        <begin position="285"/>
        <end position="305"/>
    </location>
</feature>
<feature type="transmembrane region" description="Helical" evidence="3">
    <location>
        <begin position="321"/>
        <end position="341"/>
    </location>
</feature>
<feature type="transmembrane region" description="Helical" evidence="3">
    <location>
        <begin position="344"/>
        <end position="364"/>
    </location>
</feature>
<feature type="transmembrane region" description="Helical" evidence="3">
    <location>
        <begin position="381"/>
        <end position="401"/>
    </location>
</feature>
<feature type="transmembrane region" description="Helical" evidence="3">
    <location>
        <begin position="412"/>
        <end position="432"/>
    </location>
</feature>
<feature type="glycosylation site" description="N-linked (GlcNAc...) asparagine" evidence="3">
    <location>
        <position position="168"/>
    </location>
</feature>
<feature type="glycosylation site" description="N-linked (GlcNAc...) asparagine" evidence="3">
    <location>
        <position position="174"/>
    </location>
</feature>
<feature type="glycosylation site" description="N-linked (GlcNAc...) asparagine" evidence="3">
    <location>
        <position position="179"/>
    </location>
</feature>
<feature type="glycosylation site" description="N-linked (GlcNAc...) asparagine" evidence="3">
    <location>
        <position position="193"/>
    </location>
</feature>
<evidence type="ECO:0000250" key="1"/>
<evidence type="ECO:0000250" key="2">
    <source>
        <dbReference type="UniProtKB" id="Q9NQ40"/>
    </source>
</evidence>
<evidence type="ECO:0000255" key="3"/>
<evidence type="ECO:0000305" key="4"/>
<comment type="function">
    <text evidence="2">Plasma membrane transporter mediating the uptake by cells of the water soluble vitamin B2/riboflavin that plays a key role in biochemical oxidation-reduction reactions of the carbohydrate, lipid, and amino acid metabolism.</text>
</comment>
<comment type="catalytic activity">
    <reaction evidence="2">
        <text>riboflavin(in) = riboflavin(out)</text>
        <dbReference type="Rhea" id="RHEA:35015"/>
        <dbReference type="ChEBI" id="CHEBI:57986"/>
    </reaction>
</comment>
<comment type="subcellular location">
    <subcellularLocation>
        <location evidence="1">Cell membrane</location>
        <topology evidence="1">Multi-pass membrane protein</topology>
    </subcellularLocation>
</comment>
<comment type="similarity">
    <text evidence="4">Belongs to the riboflavin transporter family.</text>
</comment>
<name>S5A3B_DANRE</name>
<reference key="1">
    <citation type="submission" date="2004-06" db="EMBL/GenBank/DDBJ databases">
        <authorList>
            <consortium name="NIH - Zebrafish Gene Collection (ZGC) project"/>
        </authorList>
    </citation>
    <scope>NUCLEOTIDE SEQUENCE [LARGE SCALE MRNA]</scope>
</reference>
<accession>Q6GMG6</accession>
<dbReference type="EMBL" id="BC074088">
    <property type="protein sequence ID" value="AAH74088.1"/>
    <property type="molecule type" value="mRNA"/>
</dbReference>
<dbReference type="RefSeq" id="NP_001002182.1">
    <property type="nucleotide sequence ID" value="NM_001002182.1"/>
</dbReference>
<dbReference type="SMR" id="Q6GMG6"/>
<dbReference type="FunCoup" id="Q6GMG6">
    <property type="interactions" value="244"/>
</dbReference>
<dbReference type="GlyCosmos" id="Q6GMG6">
    <property type="glycosylation" value="4 sites, No reported glycans"/>
</dbReference>
<dbReference type="PaxDb" id="7955-ENSDARP00000006845"/>
<dbReference type="Ensembl" id="ENSDART00000017307">
    <property type="protein sequence ID" value="ENSDARP00000006845"/>
    <property type="gene ID" value="ENSDARG00000018980"/>
</dbReference>
<dbReference type="GeneID" id="431729"/>
<dbReference type="KEGG" id="dre:431729"/>
<dbReference type="AGR" id="ZFIN:ZDB-GENE-040704-21"/>
<dbReference type="CTD" id="431729"/>
<dbReference type="ZFIN" id="ZDB-GENE-040704-21">
    <property type="gene designation" value="slc52a3-2b"/>
</dbReference>
<dbReference type="eggNOG" id="KOG4255">
    <property type="taxonomic scope" value="Eukaryota"/>
</dbReference>
<dbReference type="HOGENOM" id="CLU_034789_1_0_1"/>
<dbReference type="InParanoid" id="Q6GMG6"/>
<dbReference type="OMA" id="ITWVIFV"/>
<dbReference type="OrthoDB" id="9995836at2759"/>
<dbReference type="PhylomeDB" id="Q6GMG6"/>
<dbReference type="TreeFam" id="TF314820"/>
<dbReference type="PRO" id="PR:Q6GMG6"/>
<dbReference type="Proteomes" id="UP000000437">
    <property type="component" value="Chromosome 16"/>
</dbReference>
<dbReference type="Bgee" id="ENSDARG00000018980">
    <property type="expression patterns" value="Expressed in zone of skin and 36 other cell types or tissues"/>
</dbReference>
<dbReference type="GO" id="GO:0005886">
    <property type="term" value="C:plasma membrane"/>
    <property type="evidence" value="ECO:0000318"/>
    <property type="project" value="GO_Central"/>
</dbReference>
<dbReference type="GO" id="GO:0032217">
    <property type="term" value="F:riboflavin transmembrane transporter activity"/>
    <property type="evidence" value="ECO:0000318"/>
    <property type="project" value="GO_Central"/>
</dbReference>
<dbReference type="GO" id="GO:0032218">
    <property type="term" value="P:riboflavin transport"/>
    <property type="evidence" value="ECO:0000318"/>
    <property type="project" value="GO_Central"/>
</dbReference>
<dbReference type="InterPro" id="IPR009357">
    <property type="entry name" value="Riboflavin_transptr"/>
</dbReference>
<dbReference type="PANTHER" id="PTHR12929">
    <property type="entry name" value="SOLUTE CARRIER FAMILY 52"/>
    <property type="match status" value="1"/>
</dbReference>
<dbReference type="PANTHER" id="PTHR12929:SF6">
    <property type="entry name" value="SOLUTE CARRIER FAMILY 52, RIBOFLAVIN TRANSPORTER, MEMBER 3-B"/>
    <property type="match status" value="1"/>
</dbReference>
<dbReference type="Pfam" id="PF06237">
    <property type="entry name" value="SLC52_ribofla_tr"/>
    <property type="match status" value="1"/>
</dbReference>
<protein>
    <recommendedName>
        <fullName>Solute carrier family 52, riboflavin transporter, member 3-B</fullName>
    </recommendedName>
    <alternativeName>
        <fullName>Riboflavin transporter 2-B</fullName>
        <shortName>RFT2-B</shortName>
    </alternativeName>
</protein>
<proteinExistence type="evidence at transcript level"/>
<keyword id="KW-1003">Cell membrane</keyword>
<keyword id="KW-0325">Glycoprotein</keyword>
<keyword id="KW-0472">Membrane</keyword>
<keyword id="KW-1185">Reference proteome</keyword>
<keyword id="KW-0812">Transmembrane</keyword>
<keyword id="KW-1133">Transmembrane helix</keyword>
<keyword id="KW-0813">Transport</keyword>
<organism>
    <name type="scientific">Danio rerio</name>
    <name type="common">Zebrafish</name>
    <name type="synonym">Brachydanio rerio</name>
    <dbReference type="NCBI Taxonomy" id="7955"/>
    <lineage>
        <taxon>Eukaryota</taxon>
        <taxon>Metazoa</taxon>
        <taxon>Chordata</taxon>
        <taxon>Craniata</taxon>
        <taxon>Vertebrata</taxon>
        <taxon>Euteleostomi</taxon>
        <taxon>Actinopterygii</taxon>
        <taxon>Neopterygii</taxon>
        <taxon>Teleostei</taxon>
        <taxon>Ostariophysi</taxon>
        <taxon>Cypriniformes</taxon>
        <taxon>Danionidae</taxon>
        <taxon>Danioninae</taxon>
        <taxon>Danio</taxon>
    </lineage>
</organism>